<reference key="1">
    <citation type="submission" date="2002-03" db="EMBL/GenBank/DDBJ databases">
        <title>Ethidium bromide resistance plasmid.</title>
        <authorList>
            <person name="Fuentes D.E."/>
            <person name="Vasquez C.C."/>
        </authorList>
    </citation>
    <scope>NUCLEOTIDE SEQUENCE [GENOMIC DNA]</scope>
    <source>
        <strain>CH</strain>
    </source>
</reference>
<feature type="chain" id="PRO_0000068523" description="Protein cop">
    <location>
        <begin position="1"/>
        <end position="116"/>
    </location>
</feature>
<comment type="function">
    <text>Putative control of replication message.</text>
</comment>
<protein>
    <recommendedName>
        <fullName>Protein cop</fullName>
    </recommendedName>
</protein>
<gene>
    <name type="primary">cop</name>
</gene>
<dbReference type="EMBL" id="AY092027">
    <property type="protein sequence ID" value="AAM18179.1"/>
    <property type="molecule type" value="Genomic_DNA"/>
</dbReference>
<dbReference type="RefSeq" id="NP_647560.1">
    <property type="nucleotide sequence ID" value="NC_003969.1"/>
</dbReference>
<dbReference type="GO" id="GO:0006260">
    <property type="term" value="P:DNA replication"/>
    <property type="evidence" value="ECO:0007669"/>
    <property type="project" value="UniProtKB-KW"/>
</dbReference>
<geneLocation type="plasmid">
    <name>pSepCH</name>
</geneLocation>
<accession>Q8KQF5</accession>
<keyword id="KW-0235">DNA replication</keyword>
<keyword id="KW-0614">Plasmid</keyword>
<organism>
    <name type="scientific">Staphylococcus epidermidis</name>
    <dbReference type="NCBI Taxonomy" id="1282"/>
    <lineage>
        <taxon>Bacteria</taxon>
        <taxon>Bacillati</taxon>
        <taxon>Bacillota</taxon>
        <taxon>Bacilli</taxon>
        <taxon>Bacillales</taxon>
        <taxon>Staphylococcaceae</taxon>
        <taxon>Staphylococcus</taxon>
    </lineage>
</organism>
<sequence>MTFNKIFKYLISLLFLSILFHTIIHKNNLVFSKTMHKKVAFFSFSIFFVWIRHLKRYNSMLEKATFFVLQTSYTNELKGLYIAGNSYPYYQDKKKLVFNSFQKPFKNHQSTKIPRE</sequence>
<proteinExistence type="predicted"/>
<name>COP_STAEP</name>